<keyword id="KW-0963">Cytoplasm</keyword>
<keyword id="KW-0417">Keratinization</keyword>
<keyword id="KW-0677">Repeat</keyword>
<protein>
    <recommendedName>
        <fullName>Involucrin</fullName>
    </recommendedName>
</protein>
<name>INVO_HYLLA</name>
<reference key="1">
    <citation type="journal article" date="1990" name="Mol. Biol. Evol.">
        <title>The involucrin gene of the gibbon: the middle region shared by the hominoids.</title>
        <authorList>
            <person name="Djian P."/>
            <person name="Green H."/>
        </authorList>
    </citation>
    <scope>NUCLEOTIDE SEQUENCE [GENOMIC DNA]</scope>
</reference>
<proteinExistence type="evidence at transcript level"/>
<organism>
    <name type="scientific">Hylobates lar</name>
    <name type="common">Lar gibbon</name>
    <name type="synonym">White-handed gibbon</name>
    <dbReference type="NCBI Taxonomy" id="9580"/>
    <lineage>
        <taxon>Eukaryota</taxon>
        <taxon>Metazoa</taxon>
        <taxon>Chordata</taxon>
        <taxon>Craniata</taxon>
        <taxon>Vertebrata</taxon>
        <taxon>Euteleostomi</taxon>
        <taxon>Mammalia</taxon>
        <taxon>Eutheria</taxon>
        <taxon>Euarchontoglires</taxon>
        <taxon>Primates</taxon>
        <taxon>Haplorrhini</taxon>
        <taxon>Catarrhini</taxon>
        <taxon>Hylobatidae</taxon>
        <taxon>Hylobates</taxon>
    </lineage>
</organism>
<comment type="function">
    <text>Part of the insoluble cornified cell envelope (CE) of stratified squamous epithelia.</text>
</comment>
<comment type="subunit">
    <text evidence="1">Directly or indirectly cross-linked to cornifelin (CNFN).</text>
</comment>
<comment type="subcellular location">
    <subcellularLocation>
        <location>Cytoplasm</location>
    </subcellularLocation>
    <text>Constituent of the scaffolding of the cornified envelope.</text>
</comment>
<comment type="tissue specificity">
    <text>Keratinocytes of epidermis and other stratified squamous epithelia.</text>
</comment>
<comment type="PTM">
    <text>Substrate of transglutaminase. Specific glutamines or lysines are cross-linked to keratins, desmoplakin and to inter involucrin molecules.</text>
</comment>
<comment type="similarity">
    <text evidence="3">Belongs to the involucrin family.</text>
</comment>
<accession>P17941</accession>
<dbReference type="EMBL" id="M35447">
    <property type="protein sequence ID" value="AAA35456.1"/>
    <property type="molecule type" value="Genomic_DNA"/>
</dbReference>
<dbReference type="PIR" id="I37037">
    <property type="entry name" value="I37037"/>
</dbReference>
<dbReference type="SMR" id="P17941"/>
<dbReference type="GO" id="GO:0001533">
    <property type="term" value="C:cornified envelope"/>
    <property type="evidence" value="ECO:0000250"/>
    <property type="project" value="UniProtKB"/>
</dbReference>
<dbReference type="GO" id="GO:0005737">
    <property type="term" value="C:cytoplasm"/>
    <property type="evidence" value="ECO:0007669"/>
    <property type="project" value="UniProtKB-SubCell"/>
</dbReference>
<dbReference type="GO" id="GO:0031424">
    <property type="term" value="P:keratinization"/>
    <property type="evidence" value="ECO:0007669"/>
    <property type="project" value="UniProtKB-KW"/>
</dbReference>
<dbReference type="GO" id="GO:0030216">
    <property type="term" value="P:keratinocyte differentiation"/>
    <property type="evidence" value="ECO:0000250"/>
    <property type="project" value="UniProtKB"/>
</dbReference>
<dbReference type="GO" id="GO:0018149">
    <property type="term" value="P:peptide cross-linking"/>
    <property type="evidence" value="ECO:0000250"/>
    <property type="project" value="UniProtKB"/>
</dbReference>
<dbReference type="GO" id="GO:0010224">
    <property type="term" value="P:response to UV-B"/>
    <property type="evidence" value="ECO:0000250"/>
    <property type="project" value="UniProtKB"/>
</dbReference>
<dbReference type="InterPro" id="IPR019743">
    <property type="entry name" value="Involucrin_CS"/>
</dbReference>
<dbReference type="InterPro" id="IPR019571">
    <property type="entry name" value="Involucrin_N"/>
</dbReference>
<dbReference type="InterPro" id="IPR000354">
    <property type="entry name" value="Involucrin_rpt"/>
</dbReference>
<dbReference type="Pfam" id="PF00904">
    <property type="entry name" value="Involucrin"/>
    <property type="match status" value="20"/>
</dbReference>
<dbReference type="Pfam" id="PF10583">
    <property type="entry name" value="Involucrin_N"/>
    <property type="match status" value="1"/>
</dbReference>
<dbReference type="PROSITE" id="PS00795">
    <property type="entry name" value="INVOLUCRIN"/>
    <property type="match status" value="1"/>
</dbReference>
<gene>
    <name type="primary">IVL</name>
</gene>
<feature type="chain" id="PRO_0000159737" description="Involucrin">
    <location>
        <begin position="1"/>
        <end position="522"/>
    </location>
</feature>
<feature type="region of interest" description="Disordered" evidence="2">
    <location>
        <begin position="1"/>
        <end position="126"/>
    </location>
</feature>
<feature type="region of interest" description="Disordered" evidence="2">
    <location>
        <begin position="159"/>
        <end position="329"/>
    </location>
</feature>
<feature type="region of interest" description="Disordered" evidence="2">
    <location>
        <begin position="366"/>
        <end position="496"/>
    </location>
</feature>
<feature type="compositionally biased region" description="Polar residues" evidence="2">
    <location>
        <begin position="1"/>
        <end position="15"/>
    </location>
</feature>
<feature type="compositionally biased region" description="Low complexity" evidence="2">
    <location>
        <begin position="76"/>
        <end position="91"/>
    </location>
</feature>
<feature type="compositionally biased region" description="Basic and acidic residues" evidence="2">
    <location>
        <begin position="92"/>
        <end position="126"/>
    </location>
</feature>
<feature type="compositionally biased region" description="Low complexity" evidence="2">
    <location>
        <begin position="169"/>
        <end position="181"/>
    </location>
</feature>
<feature type="compositionally biased region" description="Basic and acidic residues" evidence="2">
    <location>
        <begin position="182"/>
        <end position="198"/>
    </location>
</feature>
<feature type="compositionally biased region" description="Basic and acidic residues" evidence="2">
    <location>
        <begin position="214"/>
        <end position="231"/>
    </location>
</feature>
<feature type="compositionally biased region" description="Basic and acidic residues" evidence="2">
    <location>
        <begin position="252"/>
        <end position="264"/>
    </location>
</feature>
<feature type="compositionally biased region" description="Basic and acidic residues" evidence="2">
    <location>
        <begin position="274"/>
        <end position="290"/>
    </location>
</feature>
<feature type="compositionally biased region" description="Basic and acidic residues" evidence="2">
    <location>
        <begin position="305"/>
        <end position="323"/>
    </location>
</feature>
<feature type="compositionally biased region" description="Low complexity" evidence="2">
    <location>
        <begin position="375"/>
        <end position="389"/>
    </location>
</feature>
<feature type="compositionally biased region" description="Basic and acidic residues" evidence="2">
    <location>
        <begin position="391"/>
        <end position="401"/>
    </location>
</feature>
<feature type="compositionally biased region" description="Basic and acidic residues" evidence="2">
    <location>
        <begin position="409"/>
        <end position="418"/>
    </location>
</feature>
<feature type="compositionally biased region" description="Basic and acidic residues" evidence="2">
    <location>
        <begin position="431"/>
        <end position="465"/>
    </location>
</feature>
<feature type="compositionally biased region" description="Low complexity" evidence="2">
    <location>
        <begin position="466"/>
        <end position="479"/>
    </location>
</feature>
<evidence type="ECO:0000250" key="1"/>
<evidence type="ECO:0000256" key="2">
    <source>
        <dbReference type="SAM" id="MobiDB-lite"/>
    </source>
</evidence>
<evidence type="ECO:0000305" key="3"/>
<sequence>MSQQHTLPVTLSPALSQELLKTVPPPVNTQQEQMKQPTPLPPPCQKVLGELPVEVPSKQEEKHMTTVKGLPEQECEQQQQEPQEQELQQQHWEQHEEHQKAENPEQQLKQEKAQRDQQLNEHLEEEKKLLDQQLNQELIKRDEQLGIKKEQLLELTEQQEGQLEHLEQQEGQLELPEQQEGQLEHLEQQEGQLKHLDQQGKQPELPEQQVAQLKHLEQQEGQLKHLEHQKGELQVPEEQVGQLKYLEQQEGQLKHLDQQEKQPELPEQQVGQLKHLEQQEGQLEHMEHQEGQLGLPEQQVGQLKQLEEQEGQPKHLEEEEGQLKHLVQQEGQLEHLVQQERQLEQQEGKVQHLEQQVEQLKHLEEQEGQLKHLEQQQGQLEVSEQQVGQPKHLEQEGKQLELPEQQEGQLKHLEKQEAQLELPEQQVGQPKHPEQQEKQLEHPEQQEGQLKHLEQQEGQLKDLEQQKGQLEQQQGQLEQPVFAPAPGQVQDIQPVLPTKGEALLPVEQQQQKQEVQWPPKHK</sequence>